<reference key="1">
    <citation type="journal article" date="2004" name="Nucleic Acids Res.">
        <title>Genome sequence of Symbiobacterium thermophilum, an uncultivable bacterium that depends on microbial commensalism.</title>
        <authorList>
            <person name="Ueda K."/>
            <person name="Yamashita A."/>
            <person name="Ishikawa J."/>
            <person name="Shimada M."/>
            <person name="Watsuji T."/>
            <person name="Morimura K."/>
            <person name="Ikeda H."/>
            <person name="Hattori M."/>
            <person name="Beppu T."/>
        </authorList>
    </citation>
    <scope>NUCLEOTIDE SEQUENCE [LARGE SCALE GENOMIC DNA]</scope>
    <source>
        <strain>DSM 24528 / JCM 14929 / IAM 14863 / T</strain>
    </source>
</reference>
<keyword id="KW-0240">DNA-directed RNA polymerase</keyword>
<keyword id="KW-0460">Magnesium</keyword>
<keyword id="KW-0479">Metal-binding</keyword>
<keyword id="KW-0548">Nucleotidyltransferase</keyword>
<keyword id="KW-1185">Reference proteome</keyword>
<keyword id="KW-0804">Transcription</keyword>
<keyword id="KW-0808">Transferase</keyword>
<keyword id="KW-0862">Zinc</keyword>
<name>RPOC_SYMTH</name>
<protein>
    <recommendedName>
        <fullName evidence="1">DNA-directed RNA polymerase subunit beta'</fullName>
        <shortName evidence="1">RNAP subunit beta'</shortName>
        <ecNumber evidence="1">2.7.7.6</ecNumber>
    </recommendedName>
    <alternativeName>
        <fullName evidence="1">RNA polymerase subunit beta'</fullName>
    </alternativeName>
    <alternativeName>
        <fullName evidence="1">Transcriptase subunit beta'</fullName>
    </alternativeName>
</protein>
<gene>
    <name evidence="1" type="primary">rpoC</name>
    <name type="ordered locus">STH3084</name>
</gene>
<dbReference type="EC" id="2.7.7.6" evidence="1"/>
<dbReference type="EMBL" id="AP006840">
    <property type="protein sequence ID" value="BAD42066.1"/>
    <property type="molecule type" value="Genomic_DNA"/>
</dbReference>
<dbReference type="RefSeq" id="WP_011197199.1">
    <property type="nucleotide sequence ID" value="NC_006177.1"/>
</dbReference>
<dbReference type="SMR" id="Q67JT4"/>
<dbReference type="STRING" id="292459.STH3084"/>
<dbReference type="KEGG" id="sth:STH3084"/>
<dbReference type="eggNOG" id="COG0086">
    <property type="taxonomic scope" value="Bacteria"/>
</dbReference>
<dbReference type="HOGENOM" id="CLU_000524_3_0_9"/>
<dbReference type="OrthoDB" id="9815296at2"/>
<dbReference type="Proteomes" id="UP000000417">
    <property type="component" value="Chromosome"/>
</dbReference>
<dbReference type="GO" id="GO:0000428">
    <property type="term" value="C:DNA-directed RNA polymerase complex"/>
    <property type="evidence" value="ECO:0007669"/>
    <property type="project" value="UniProtKB-KW"/>
</dbReference>
<dbReference type="GO" id="GO:0003677">
    <property type="term" value="F:DNA binding"/>
    <property type="evidence" value="ECO:0007669"/>
    <property type="project" value="UniProtKB-UniRule"/>
</dbReference>
<dbReference type="GO" id="GO:0003899">
    <property type="term" value="F:DNA-directed RNA polymerase activity"/>
    <property type="evidence" value="ECO:0007669"/>
    <property type="project" value="UniProtKB-UniRule"/>
</dbReference>
<dbReference type="GO" id="GO:0000287">
    <property type="term" value="F:magnesium ion binding"/>
    <property type="evidence" value="ECO:0007669"/>
    <property type="project" value="UniProtKB-UniRule"/>
</dbReference>
<dbReference type="GO" id="GO:0008270">
    <property type="term" value="F:zinc ion binding"/>
    <property type="evidence" value="ECO:0007669"/>
    <property type="project" value="UniProtKB-UniRule"/>
</dbReference>
<dbReference type="GO" id="GO:0006351">
    <property type="term" value="P:DNA-templated transcription"/>
    <property type="evidence" value="ECO:0007669"/>
    <property type="project" value="UniProtKB-UniRule"/>
</dbReference>
<dbReference type="CDD" id="cd02655">
    <property type="entry name" value="RNAP_beta'_C"/>
    <property type="match status" value="1"/>
</dbReference>
<dbReference type="CDD" id="cd01609">
    <property type="entry name" value="RNAP_beta'_N"/>
    <property type="match status" value="1"/>
</dbReference>
<dbReference type="FunFam" id="1.10.150.390:FF:000002">
    <property type="entry name" value="DNA-directed RNA polymerase subunit beta"/>
    <property type="match status" value="1"/>
</dbReference>
<dbReference type="FunFam" id="1.10.40.90:FF:000001">
    <property type="entry name" value="DNA-directed RNA polymerase subunit beta"/>
    <property type="match status" value="1"/>
</dbReference>
<dbReference type="FunFam" id="4.10.860.120:FF:000001">
    <property type="entry name" value="DNA-directed RNA polymerase subunit beta"/>
    <property type="match status" value="1"/>
</dbReference>
<dbReference type="Gene3D" id="1.10.132.30">
    <property type="match status" value="1"/>
</dbReference>
<dbReference type="Gene3D" id="1.10.150.390">
    <property type="match status" value="1"/>
</dbReference>
<dbReference type="Gene3D" id="1.10.1790.20">
    <property type="match status" value="1"/>
</dbReference>
<dbReference type="Gene3D" id="1.10.40.90">
    <property type="match status" value="1"/>
</dbReference>
<dbReference type="Gene3D" id="2.40.40.20">
    <property type="match status" value="1"/>
</dbReference>
<dbReference type="Gene3D" id="2.40.50.100">
    <property type="match status" value="1"/>
</dbReference>
<dbReference type="Gene3D" id="4.10.860.120">
    <property type="entry name" value="RNA polymerase II, clamp domain"/>
    <property type="match status" value="1"/>
</dbReference>
<dbReference type="Gene3D" id="1.10.274.100">
    <property type="entry name" value="RNA polymerase Rpb1, domain 3"/>
    <property type="match status" value="1"/>
</dbReference>
<dbReference type="HAMAP" id="MF_01322">
    <property type="entry name" value="RNApol_bact_RpoC"/>
    <property type="match status" value="1"/>
</dbReference>
<dbReference type="InterPro" id="IPR045867">
    <property type="entry name" value="DNA-dir_RpoC_beta_prime"/>
</dbReference>
<dbReference type="InterPro" id="IPR012754">
    <property type="entry name" value="DNA-dir_RpoC_beta_prime_bact"/>
</dbReference>
<dbReference type="InterPro" id="IPR000722">
    <property type="entry name" value="RNA_pol_asu"/>
</dbReference>
<dbReference type="InterPro" id="IPR006592">
    <property type="entry name" value="RNA_pol_N"/>
</dbReference>
<dbReference type="InterPro" id="IPR007080">
    <property type="entry name" value="RNA_pol_Rpb1_1"/>
</dbReference>
<dbReference type="InterPro" id="IPR007066">
    <property type="entry name" value="RNA_pol_Rpb1_3"/>
</dbReference>
<dbReference type="InterPro" id="IPR042102">
    <property type="entry name" value="RNA_pol_Rpb1_3_sf"/>
</dbReference>
<dbReference type="InterPro" id="IPR007083">
    <property type="entry name" value="RNA_pol_Rpb1_4"/>
</dbReference>
<dbReference type="InterPro" id="IPR007081">
    <property type="entry name" value="RNA_pol_Rpb1_5"/>
</dbReference>
<dbReference type="InterPro" id="IPR044893">
    <property type="entry name" value="RNA_pol_Rpb1_clamp_domain"/>
</dbReference>
<dbReference type="InterPro" id="IPR038120">
    <property type="entry name" value="Rpb1_funnel_sf"/>
</dbReference>
<dbReference type="NCBIfam" id="NF011498">
    <property type="entry name" value="PRK14906.1"/>
    <property type="match status" value="1"/>
</dbReference>
<dbReference type="NCBIfam" id="TIGR02386">
    <property type="entry name" value="rpoC_TIGR"/>
    <property type="match status" value="1"/>
</dbReference>
<dbReference type="PANTHER" id="PTHR19376">
    <property type="entry name" value="DNA-DIRECTED RNA POLYMERASE"/>
    <property type="match status" value="1"/>
</dbReference>
<dbReference type="PANTHER" id="PTHR19376:SF54">
    <property type="entry name" value="DNA-DIRECTED RNA POLYMERASE SUBUNIT BETA"/>
    <property type="match status" value="1"/>
</dbReference>
<dbReference type="Pfam" id="PF04997">
    <property type="entry name" value="RNA_pol_Rpb1_1"/>
    <property type="match status" value="1"/>
</dbReference>
<dbReference type="Pfam" id="PF00623">
    <property type="entry name" value="RNA_pol_Rpb1_2"/>
    <property type="match status" value="1"/>
</dbReference>
<dbReference type="Pfam" id="PF04983">
    <property type="entry name" value="RNA_pol_Rpb1_3"/>
    <property type="match status" value="1"/>
</dbReference>
<dbReference type="Pfam" id="PF05000">
    <property type="entry name" value="RNA_pol_Rpb1_4"/>
    <property type="match status" value="1"/>
</dbReference>
<dbReference type="Pfam" id="PF04998">
    <property type="entry name" value="RNA_pol_Rpb1_5"/>
    <property type="match status" value="2"/>
</dbReference>
<dbReference type="SMART" id="SM00663">
    <property type="entry name" value="RPOLA_N"/>
    <property type="match status" value="1"/>
</dbReference>
<dbReference type="SUPFAM" id="SSF64484">
    <property type="entry name" value="beta and beta-prime subunits of DNA dependent RNA-polymerase"/>
    <property type="match status" value="1"/>
</dbReference>
<evidence type="ECO:0000255" key="1">
    <source>
        <dbReference type="HAMAP-Rule" id="MF_01322"/>
    </source>
</evidence>
<feature type="chain" id="PRO_0000225583" description="DNA-directed RNA polymerase subunit beta'">
    <location>
        <begin position="1"/>
        <end position="1179"/>
    </location>
</feature>
<feature type="binding site" evidence="1">
    <location>
        <position position="60"/>
    </location>
    <ligand>
        <name>Zn(2+)</name>
        <dbReference type="ChEBI" id="CHEBI:29105"/>
        <label>1</label>
    </ligand>
</feature>
<feature type="binding site" evidence="1">
    <location>
        <position position="62"/>
    </location>
    <ligand>
        <name>Zn(2+)</name>
        <dbReference type="ChEBI" id="CHEBI:29105"/>
        <label>1</label>
    </ligand>
</feature>
<feature type="binding site" evidence="1">
    <location>
        <position position="75"/>
    </location>
    <ligand>
        <name>Zn(2+)</name>
        <dbReference type="ChEBI" id="CHEBI:29105"/>
        <label>1</label>
    </ligand>
</feature>
<feature type="binding site" evidence="1">
    <location>
        <position position="78"/>
    </location>
    <ligand>
        <name>Zn(2+)</name>
        <dbReference type="ChEBI" id="CHEBI:29105"/>
        <label>1</label>
    </ligand>
</feature>
<feature type="binding site" evidence="1">
    <location>
        <position position="449"/>
    </location>
    <ligand>
        <name>Mg(2+)</name>
        <dbReference type="ChEBI" id="CHEBI:18420"/>
    </ligand>
</feature>
<feature type="binding site" evidence="1">
    <location>
        <position position="451"/>
    </location>
    <ligand>
        <name>Mg(2+)</name>
        <dbReference type="ChEBI" id="CHEBI:18420"/>
    </ligand>
</feature>
<feature type="binding site" evidence="1">
    <location>
        <position position="453"/>
    </location>
    <ligand>
        <name>Mg(2+)</name>
        <dbReference type="ChEBI" id="CHEBI:18420"/>
    </ligand>
</feature>
<feature type="binding site" evidence="1">
    <location>
        <position position="796"/>
    </location>
    <ligand>
        <name>Zn(2+)</name>
        <dbReference type="ChEBI" id="CHEBI:29105"/>
        <label>2</label>
    </ligand>
</feature>
<feature type="binding site" evidence="1">
    <location>
        <position position="871"/>
    </location>
    <ligand>
        <name>Zn(2+)</name>
        <dbReference type="ChEBI" id="CHEBI:29105"/>
        <label>2</label>
    </ligand>
</feature>
<feature type="binding site" evidence="1">
    <location>
        <position position="878"/>
    </location>
    <ligand>
        <name>Zn(2+)</name>
        <dbReference type="ChEBI" id="CHEBI:29105"/>
        <label>2</label>
    </ligand>
</feature>
<feature type="binding site" evidence="1">
    <location>
        <position position="881"/>
    </location>
    <ligand>
        <name>Zn(2+)</name>
        <dbReference type="ChEBI" id="CHEBI:29105"/>
        <label>2</label>
    </ligand>
</feature>
<comment type="function">
    <text evidence="1">DNA-dependent RNA polymerase catalyzes the transcription of DNA into RNA using the four ribonucleoside triphosphates as substrates.</text>
</comment>
<comment type="catalytic activity">
    <reaction evidence="1">
        <text>RNA(n) + a ribonucleoside 5'-triphosphate = RNA(n+1) + diphosphate</text>
        <dbReference type="Rhea" id="RHEA:21248"/>
        <dbReference type="Rhea" id="RHEA-COMP:14527"/>
        <dbReference type="Rhea" id="RHEA-COMP:17342"/>
        <dbReference type="ChEBI" id="CHEBI:33019"/>
        <dbReference type="ChEBI" id="CHEBI:61557"/>
        <dbReference type="ChEBI" id="CHEBI:140395"/>
        <dbReference type="EC" id="2.7.7.6"/>
    </reaction>
</comment>
<comment type="cofactor">
    <cofactor evidence="1">
        <name>Mg(2+)</name>
        <dbReference type="ChEBI" id="CHEBI:18420"/>
    </cofactor>
    <text evidence="1">Binds 1 Mg(2+) ion per subunit.</text>
</comment>
<comment type="cofactor">
    <cofactor evidence="1">
        <name>Zn(2+)</name>
        <dbReference type="ChEBI" id="CHEBI:29105"/>
    </cofactor>
    <text evidence="1">Binds 2 Zn(2+) ions per subunit.</text>
</comment>
<comment type="subunit">
    <text evidence="1">The RNAP catalytic core consists of 2 alpha, 1 beta, 1 beta' and 1 omega subunit. When a sigma factor is associated with the core the holoenzyme is formed, which can initiate transcription.</text>
</comment>
<comment type="similarity">
    <text evidence="1">Belongs to the RNA polymerase beta' chain family.</text>
</comment>
<sequence length="1179" mass="132941">MLDVNFFDSIQIGLASPERIRQWSRGEVKKPETINYRTLRPERDGLFCERIFGPTRDWECHCGKYKRVRYKGIVCDRCGVEVTRAKVRRERMGHIELAAPVSHIWYFKGIPSRMGLILDISPRALEKVLYFAAYIVTDPGDTPLMEKQLLTENEYREYREKYGDAFKAGMGAEAVKVLLEKLDLDKMAEELRHEVRTVSGQRKIRATRRLEVVEAFRKSGNRPEWMILEVIPVIPPDLRPMVQLDGGRFATSDLNDLYRRVINRNNRLKRLLDLGAPDIIVRNEKRMLQEAVDALIDNGRRGRPVTGPGNRPLKSLSDMLKGKQGRFRQNLLGKRVDYSGRSVIVVGPHLKLHQCGLPKEMALELFKPFVMKKLVNDGHAHNIKSAKRMVERMRPEVWDVLEEVIREHPVLLNRAPTLHRLGIQAFEPVLVEGRAIQIHPLVCTAYNADFDGDQMAVHVPLSAEAQAEARILMLAAHNILNPKDGQPVITPSKDMLLGSYYLTLPKPDSEPKMRFSHPHEALLAYQNGLVELHDWVEIRFPEPPKDLEPYSEEWWEHPDNWNTVSGKRIKTTIGRMIFNEVLHPKLRYINETIEKKWMGKIIDMAYRKLGTVKTAEQTDKIKDLGFRFATQSGATIAISDIKVPGDKDEILRQAEKEVDQVERNYRRGLITNDERYQRVIAIWSEAKEKVTSTLVKTMEDFNPVNMMMKSGARGNISQITQLAGMRGLMADPSGKIVELPVKANFREGLTVLEYFLSTHGTRKGLADTSLRTADSGYLTRRLVDVAQDVIVREDDCGTTAGITWTEEVDQFGNVIEPITPHIVGRVALNDIVHPETGEIIVYANEMIDEDLAEQILAAGIKEVTIRSVLTCRTRYGVCRACYGRNLATGRLVDVGEAVGIIAAQSIGEPGTQLTMRTFHTGGVAGDDITQGLPRVEELFEARKPKGQAIIAELDGEVSITEQKGRREITITSEDGESVTYSIPYGARVKVRSGQFVEAGDELTEGSVNPHDLLRVKGLRGVQRYLLREVQKVYNLQGVDINDKHIEIMVRQMLRKVKVEDPGDTDLLPGGFVDIFDFEDENERVIMEGGVPAVARPMLLGITKASLATDSFLSAASFQETTRVLTDAAIKGKRDPLLGLKENVIIGKLIPAGTGMGRYRNIKLFTEDDVYAEHLQGADD</sequence>
<proteinExistence type="inferred from homology"/>
<accession>Q67JT4</accession>
<organism>
    <name type="scientific">Symbiobacterium thermophilum (strain DSM 24528 / JCM 14929 / IAM 14863 / T)</name>
    <dbReference type="NCBI Taxonomy" id="292459"/>
    <lineage>
        <taxon>Bacteria</taxon>
        <taxon>Bacillati</taxon>
        <taxon>Bacillota</taxon>
        <taxon>Clostridia</taxon>
        <taxon>Eubacteriales</taxon>
        <taxon>Symbiobacteriaceae</taxon>
        <taxon>Symbiobacterium</taxon>
    </lineage>
</organism>